<name>IOVO_LARMA</name>
<organism>
    <name type="scientific">Larus marinus</name>
    <name type="common">Great black-backed gull</name>
    <dbReference type="NCBI Taxonomy" id="8912"/>
    <lineage>
        <taxon>Eukaryota</taxon>
        <taxon>Metazoa</taxon>
        <taxon>Chordata</taxon>
        <taxon>Craniata</taxon>
        <taxon>Vertebrata</taxon>
        <taxon>Euteleostomi</taxon>
        <taxon>Archelosauria</taxon>
        <taxon>Archosauria</taxon>
        <taxon>Dinosauria</taxon>
        <taxon>Saurischia</taxon>
        <taxon>Theropoda</taxon>
        <taxon>Coelurosauria</taxon>
        <taxon>Aves</taxon>
        <taxon>Neognathae</taxon>
        <taxon>Neoaves</taxon>
        <taxon>Charadriiformes</taxon>
        <taxon>Laridae</taxon>
        <taxon>Larus</taxon>
    </lineage>
</organism>
<protein>
    <recommendedName>
        <fullName>Ovomucoid</fullName>
    </recommendedName>
</protein>
<keyword id="KW-0903">Direct protein sequencing</keyword>
<keyword id="KW-1015">Disulfide bond</keyword>
<keyword id="KW-0325">Glycoprotein</keyword>
<keyword id="KW-0646">Protease inhibitor</keyword>
<keyword id="KW-0677">Repeat</keyword>
<keyword id="KW-0964">Secreted</keyword>
<keyword id="KW-0722">Serine protease inhibitor</keyword>
<dbReference type="PIR" id="F61494">
    <property type="entry name" value="F61494"/>
</dbReference>
<dbReference type="SMR" id="P68385"/>
<dbReference type="GO" id="GO:0005576">
    <property type="term" value="C:extracellular region"/>
    <property type="evidence" value="ECO:0007669"/>
    <property type="project" value="UniProtKB-SubCell"/>
</dbReference>
<dbReference type="GO" id="GO:0004867">
    <property type="term" value="F:serine-type endopeptidase inhibitor activity"/>
    <property type="evidence" value="ECO:0007669"/>
    <property type="project" value="UniProtKB-KW"/>
</dbReference>
<dbReference type="CDD" id="cd00104">
    <property type="entry name" value="KAZAL_FS"/>
    <property type="match status" value="1"/>
</dbReference>
<dbReference type="FunFam" id="3.30.60.30:FF:000037">
    <property type="entry name" value="Ovomucoid"/>
    <property type="match status" value="1"/>
</dbReference>
<dbReference type="Gene3D" id="3.30.60.30">
    <property type="match status" value="1"/>
</dbReference>
<dbReference type="InterPro" id="IPR051597">
    <property type="entry name" value="Bifunctional_prot_inhibitor"/>
</dbReference>
<dbReference type="InterPro" id="IPR002350">
    <property type="entry name" value="Kazal_dom"/>
</dbReference>
<dbReference type="InterPro" id="IPR036058">
    <property type="entry name" value="Kazal_dom_sf"/>
</dbReference>
<dbReference type="InterPro" id="IPR001239">
    <property type="entry name" value="Prot_inh_Kazal-m"/>
</dbReference>
<dbReference type="PANTHER" id="PTHR47729:SF1">
    <property type="entry name" value="OVOMUCOID-LIKE-RELATED"/>
    <property type="match status" value="1"/>
</dbReference>
<dbReference type="PANTHER" id="PTHR47729">
    <property type="entry name" value="SERINE PEPTIDASE INHIBITOR, KAZAL TYPE 2, TANDEM DUPLICATE 1-RELATED"/>
    <property type="match status" value="1"/>
</dbReference>
<dbReference type="Pfam" id="PF00050">
    <property type="entry name" value="Kazal_1"/>
    <property type="match status" value="1"/>
</dbReference>
<dbReference type="PRINTS" id="PR00290">
    <property type="entry name" value="KAZALINHBTR"/>
</dbReference>
<dbReference type="SMART" id="SM00280">
    <property type="entry name" value="KAZAL"/>
    <property type="match status" value="1"/>
</dbReference>
<dbReference type="SUPFAM" id="SSF100895">
    <property type="entry name" value="Kazal-type serine protease inhibitors"/>
    <property type="match status" value="1"/>
</dbReference>
<dbReference type="PROSITE" id="PS00282">
    <property type="entry name" value="KAZAL_1"/>
    <property type="match status" value="1"/>
</dbReference>
<dbReference type="PROSITE" id="PS51465">
    <property type="entry name" value="KAZAL_2"/>
    <property type="match status" value="1"/>
</dbReference>
<feature type="chain" id="PRO_0000073127" description="Ovomucoid">
    <location>
        <begin position="1" status="less than"/>
        <end position="54" status="greater than"/>
    </location>
</feature>
<feature type="domain" description="Kazal-like" evidence="1">
    <location>
        <begin position="4"/>
        <end position="54"/>
    </location>
</feature>
<feature type="site" description="Reactive bond 3">
    <location>
        <begin position="16"/>
        <end position="17"/>
    </location>
</feature>
<feature type="glycosylation site" description="N-linked (GlcNAc...) asparagine">
    <location>
        <position position="43"/>
    </location>
</feature>
<feature type="disulfide bond">
    <location>
        <begin position="6"/>
        <end position="36"/>
    </location>
</feature>
<feature type="disulfide bond">
    <location>
        <begin position="14"/>
        <end position="33"/>
    </location>
</feature>
<feature type="disulfide bond">
    <location>
        <begin position="22"/>
        <end position="54"/>
    </location>
</feature>
<feature type="non-terminal residue">
    <location>
        <position position="1"/>
    </location>
</feature>
<feature type="non-terminal residue">
    <location>
        <position position="54"/>
    </location>
</feature>
<reference key="1">
    <citation type="journal article" date="1990" name="J. Protein Chem.">
        <title>Amino acid sequences of ovomucoid third domain from 25 additional species of birds.</title>
        <authorList>
            <person name="Laskowski M. Jr."/>
            <person name="Apostol I."/>
            <person name="Ardelt W."/>
            <person name="Cook J."/>
            <person name="Giletto A."/>
            <person name="Kelly C.A."/>
            <person name="Lu W."/>
            <person name="Park S.J."/>
            <person name="Qasim M.A."/>
            <person name="Whatley H.E."/>
            <person name="Wieczorek A."/>
            <person name="Wynn R."/>
        </authorList>
    </citation>
    <scope>PROTEIN SEQUENCE</scope>
</reference>
<accession>P68385</accession>
<accession>P05614</accession>
<evidence type="ECO:0000255" key="1">
    <source>
        <dbReference type="PROSITE-ProRule" id="PRU00798"/>
    </source>
</evidence>
<proteinExistence type="evidence at protein level"/>
<sequence>IATVDCSDYPKPACSLDYMPLCGSDSKTYSNKCNFCNAVVDSNGTLTLSHFEKC</sequence>
<comment type="subcellular location">
    <subcellularLocation>
        <location>Secreted</location>
    </subcellularLocation>
</comment>
<comment type="domain">
    <text>Avian ovomucoid consists of three homologous, tandem Kazal family inhibitory domains.</text>
</comment>